<gene>
    <name evidence="1" type="primary">pstB</name>
    <name type="ordered locus">BAB1_2144</name>
</gene>
<keyword id="KW-0067">ATP-binding</keyword>
<keyword id="KW-0997">Cell inner membrane</keyword>
<keyword id="KW-1003">Cell membrane</keyword>
<keyword id="KW-0472">Membrane</keyword>
<keyword id="KW-0547">Nucleotide-binding</keyword>
<keyword id="KW-0592">Phosphate transport</keyword>
<keyword id="KW-1185">Reference proteome</keyword>
<keyword id="KW-1278">Translocase</keyword>
<keyword id="KW-0813">Transport</keyword>
<protein>
    <recommendedName>
        <fullName evidence="1">Phosphate import ATP-binding protein PstB</fullName>
        <ecNumber evidence="1">7.3.2.1</ecNumber>
    </recommendedName>
    <alternativeName>
        <fullName evidence="1">ABC phosphate transporter</fullName>
    </alternativeName>
    <alternativeName>
        <fullName evidence="1">Phosphate-transporting ATPase</fullName>
    </alternativeName>
</protein>
<comment type="function">
    <text evidence="1">Part of the ABC transporter complex PstSACB involved in phosphate import. Responsible for energy coupling to the transport system.</text>
</comment>
<comment type="catalytic activity">
    <reaction evidence="1">
        <text>phosphate(out) + ATP + H2O = ADP + 2 phosphate(in) + H(+)</text>
        <dbReference type="Rhea" id="RHEA:24440"/>
        <dbReference type="ChEBI" id="CHEBI:15377"/>
        <dbReference type="ChEBI" id="CHEBI:15378"/>
        <dbReference type="ChEBI" id="CHEBI:30616"/>
        <dbReference type="ChEBI" id="CHEBI:43474"/>
        <dbReference type="ChEBI" id="CHEBI:456216"/>
        <dbReference type="EC" id="7.3.2.1"/>
    </reaction>
</comment>
<comment type="subunit">
    <text evidence="1">The complex is composed of two ATP-binding proteins (PstB), two transmembrane proteins (PstC and PstA) and a solute-binding protein (PstS).</text>
</comment>
<comment type="subcellular location">
    <subcellularLocation>
        <location evidence="1">Cell inner membrane</location>
        <topology evidence="1">Peripheral membrane protein</topology>
    </subcellularLocation>
</comment>
<comment type="similarity">
    <text evidence="1">Belongs to the ABC transporter superfamily. Phosphate importer (TC 3.A.1.7) family.</text>
</comment>
<comment type="sequence caution" evidence="2">
    <conflict type="erroneous initiation">
        <sequence resource="EMBL-CDS" id="CAJ12100"/>
    </conflict>
</comment>
<dbReference type="EC" id="7.3.2.1" evidence="1"/>
<dbReference type="EMBL" id="AM040264">
    <property type="protein sequence ID" value="CAJ12100.1"/>
    <property type="status" value="ALT_INIT"/>
    <property type="molecule type" value="Genomic_DNA"/>
</dbReference>
<dbReference type="RefSeq" id="WP_002965205.1">
    <property type="nucleotide sequence ID" value="NZ_KN046823.1"/>
</dbReference>
<dbReference type="SMR" id="Q2YQT8"/>
<dbReference type="STRING" id="359391.BAB1_2144"/>
<dbReference type="GeneID" id="97534603"/>
<dbReference type="KEGG" id="bmf:BAB1_2144"/>
<dbReference type="HOGENOM" id="CLU_000604_1_22_5"/>
<dbReference type="PhylomeDB" id="Q2YQT8"/>
<dbReference type="Proteomes" id="UP000002719">
    <property type="component" value="Chromosome I"/>
</dbReference>
<dbReference type="GO" id="GO:0005886">
    <property type="term" value="C:plasma membrane"/>
    <property type="evidence" value="ECO:0007669"/>
    <property type="project" value="UniProtKB-SubCell"/>
</dbReference>
<dbReference type="GO" id="GO:0005524">
    <property type="term" value="F:ATP binding"/>
    <property type="evidence" value="ECO:0007669"/>
    <property type="project" value="UniProtKB-KW"/>
</dbReference>
<dbReference type="GO" id="GO:0016887">
    <property type="term" value="F:ATP hydrolysis activity"/>
    <property type="evidence" value="ECO:0007669"/>
    <property type="project" value="InterPro"/>
</dbReference>
<dbReference type="GO" id="GO:0015415">
    <property type="term" value="F:ATPase-coupled phosphate ion transmembrane transporter activity"/>
    <property type="evidence" value="ECO:0007669"/>
    <property type="project" value="UniProtKB-EC"/>
</dbReference>
<dbReference type="GO" id="GO:0035435">
    <property type="term" value="P:phosphate ion transmembrane transport"/>
    <property type="evidence" value="ECO:0007669"/>
    <property type="project" value="InterPro"/>
</dbReference>
<dbReference type="CDD" id="cd03260">
    <property type="entry name" value="ABC_PstB_phosphate_transporter"/>
    <property type="match status" value="1"/>
</dbReference>
<dbReference type="Gene3D" id="3.40.50.300">
    <property type="entry name" value="P-loop containing nucleotide triphosphate hydrolases"/>
    <property type="match status" value="1"/>
</dbReference>
<dbReference type="InterPro" id="IPR003593">
    <property type="entry name" value="AAA+_ATPase"/>
</dbReference>
<dbReference type="InterPro" id="IPR003439">
    <property type="entry name" value="ABC_transporter-like_ATP-bd"/>
</dbReference>
<dbReference type="InterPro" id="IPR017871">
    <property type="entry name" value="ABC_transporter-like_CS"/>
</dbReference>
<dbReference type="InterPro" id="IPR027417">
    <property type="entry name" value="P-loop_NTPase"/>
</dbReference>
<dbReference type="InterPro" id="IPR005670">
    <property type="entry name" value="PstB-like"/>
</dbReference>
<dbReference type="NCBIfam" id="TIGR00972">
    <property type="entry name" value="3a0107s01c2"/>
    <property type="match status" value="1"/>
</dbReference>
<dbReference type="PANTHER" id="PTHR43423">
    <property type="entry name" value="ABC TRANSPORTER I FAMILY MEMBER 17"/>
    <property type="match status" value="1"/>
</dbReference>
<dbReference type="PANTHER" id="PTHR43423:SF1">
    <property type="entry name" value="ABC TRANSPORTER I FAMILY MEMBER 17"/>
    <property type="match status" value="1"/>
</dbReference>
<dbReference type="Pfam" id="PF00005">
    <property type="entry name" value="ABC_tran"/>
    <property type="match status" value="1"/>
</dbReference>
<dbReference type="SMART" id="SM00382">
    <property type="entry name" value="AAA"/>
    <property type="match status" value="1"/>
</dbReference>
<dbReference type="SUPFAM" id="SSF52540">
    <property type="entry name" value="P-loop containing nucleoside triphosphate hydrolases"/>
    <property type="match status" value="1"/>
</dbReference>
<dbReference type="PROSITE" id="PS00211">
    <property type="entry name" value="ABC_TRANSPORTER_1"/>
    <property type="match status" value="1"/>
</dbReference>
<dbReference type="PROSITE" id="PS50893">
    <property type="entry name" value="ABC_TRANSPORTER_2"/>
    <property type="match status" value="1"/>
</dbReference>
<dbReference type="PROSITE" id="PS51238">
    <property type="entry name" value="PSTB"/>
    <property type="match status" value="1"/>
</dbReference>
<sequence length="273" mass="30257">MNLMAERSLENAVGEKMNATASSIKMRGEKVCVFYGEKQALFDVDLDIPEKMVTALIGPSGCGKSTFLRSLNRMNDTIEGCRIAGRITLDNEDIYDPRLDVVELRARVGMVFQKPNPFPKSIYENVAYGPRIHGLARSKAELEEIVVTSLQKASLFEEVKDRLHDAGTGLSGGQQQRLCIARAIAVSPEVILMDEPCSALDPIATAKVEELIDELRQNFTIVIVTHSMQQAARVSQRTAMFHLGNLVEVGDTEMMFTAPTEKRTQDYITGRFG</sequence>
<reference key="1">
    <citation type="journal article" date="2005" name="Infect. Immun.">
        <title>Whole-genome analyses of speciation events in pathogenic Brucellae.</title>
        <authorList>
            <person name="Chain P.S."/>
            <person name="Comerci D.J."/>
            <person name="Tolmasky M.E."/>
            <person name="Larimer F.W."/>
            <person name="Malfatti S.A."/>
            <person name="Vergez L.M."/>
            <person name="Aguero F."/>
            <person name="Land M.L."/>
            <person name="Ugalde R.A."/>
            <person name="Garcia E."/>
        </authorList>
    </citation>
    <scope>NUCLEOTIDE SEQUENCE [LARGE SCALE GENOMIC DNA]</scope>
    <source>
        <strain>2308</strain>
    </source>
</reference>
<feature type="chain" id="PRO_0000260206" description="Phosphate import ATP-binding protein PstB">
    <location>
        <begin position="1"/>
        <end position="273"/>
    </location>
</feature>
<feature type="domain" description="ABC transporter" evidence="1">
    <location>
        <begin position="26"/>
        <end position="268"/>
    </location>
</feature>
<feature type="binding site" evidence="1">
    <location>
        <begin position="58"/>
        <end position="65"/>
    </location>
    <ligand>
        <name>ATP</name>
        <dbReference type="ChEBI" id="CHEBI:30616"/>
    </ligand>
</feature>
<evidence type="ECO:0000255" key="1">
    <source>
        <dbReference type="HAMAP-Rule" id="MF_01702"/>
    </source>
</evidence>
<evidence type="ECO:0000305" key="2"/>
<name>PSTB_BRUA2</name>
<organism>
    <name type="scientific">Brucella abortus (strain 2308)</name>
    <dbReference type="NCBI Taxonomy" id="359391"/>
    <lineage>
        <taxon>Bacteria</taxon>
        <taxon>Pseudomonadati</taxon>
        <taxon>Pseudomonadota</taxon>
        <taxon>Alphaproteobacteria</taxon>
        <taxon>Hyphomicrobiales</taxon>
        <taxon>Brucellaceae</taxon>
        <taxon>Brucella/Ochrobactrum group</taxon>
        <taxon>Brucella</taxon>
    </lineage>
</organism>
<accession>Q2YQT8</accession>
<proteinExistence type="inferred from homology"/>